<comment type="function">
    <text evidence="3">Involved in the biosynthesis of the catecholic siderophore bacillibactin. Catalyzes the activation of the carboxylate group of 2,3-dihydroxy-benzoate (DHB), via ATP-dependent PPi exchange reactions, to the acyladenylate.</text>
</comment>
<comment type="catalytic activity">
    <reaction evidence="1">
        <text>2,3-dihydroxybenzoate + holo-[ACP] + ATP = 2,3-dihydroxybenzoyl-[ACP] + AMP + diphosphate</text>
        <dbReference type="Rhea" id="RHEA:61652"/>
        <dbReference type="Rhea" id="RHEA-COMP:9685"/>
        <dbReference type="Rhea" id="RHEA-COMP:19024"/>
        <dbReference type="ChEBI" id="CHEBI:30616"/>
        <dbReference type="ChEBI" id="CHEBI:33019"/>
        <dbReference type="ChEBI" id="CHEBI:36654"/>
        <dbReference type="ChEBI" id="CHEBI:64479"/>
        <dbReference type="ChEBI" id="CHEBI:90610"/>
        <dbReference type="ChEBI" id="CHEBI:456215"/>
        <dbReference type="EC" id="6.2.1.71"/>
    </reaction>
</comment>
<comment type="pathway">
    <text evidence="6">Siderophore biosynthesis; bacillibactin biosynthesis.</text>
</comment>
<comment type="subcellular location">
    <subcellularLocation>
        <location evidence="5">Cytoplasm</location>
    </subcellularLocation>
</comment>
<comment type="similarity">
    <text evidence="5">Belongs to the ATP-dependent AMP-binding enzyme family.</text>
</comment>
<feature type="chain" id="PRO_0000193074" description="2,3-dihydroxybenzoate-AMP ligase">
    <location>
        <begin position="1"/>
        <end position="539"/>
    </location>
</feature>
<feature type="binding site" evidence="2">
    <location>
        <position position="191"/>
    </location>
    <ligand>
        <name>ATP</name>
        <dbReference type="ChEBI" id="CHEBI:30616"/>
    </ligand>
</feature>
<feature type="binding site" evidence="2">
    <location>
        <begin position="234"/>
        <end position="235"/>
    </location>
    <ligand>
        <name>substrate</name>
    </ligand>
</feature>
<feature type="binding site" evidence="2">
    <location>
        <position position="240"/>
    </location>
    <ligand>
        <name>substrate</name>
    </ligand>
</feature>
<feature type="binding site" evidence="2">
    <location>
        <position position="307"/>
    </location>
    <ligand>
        <name>ATP</name>
        <dbReference type="ChEBI" id="CHEBI:30616"/>
    </ligand>
</feature>
<feature type="binding site" evidence="2">
    <location>
        <position position="329"/>
    </location>
    <ligand>
        <name>ATP</name>
        <dbReference type="ChEBI" id="CHEBI:30616"/>
    </ligand>
</feature>
<feature type="binding site" evidence="2">
    <location>
        <position position="413"/>
    </location>
    <ligand>
        <name>ATP</name>
        <dbReference type="ChEBI" id="CHEBI:30616"/>
    </ligand>
</feature>
<feature type="binding site" evidence="2">
    <location>
        <position position="428"/>
    </location>
    <ligand>
        <name>ATP</name>
        <dbReference type="ChEBI" id="CHEBI:30616"/>
    </ligand>
</feature>
<feature type="binding site" evidence="2">
    <location>
        <position position="519"/>
    </location>
    <ligand>
        <name>ATP</name>
        <dbReference type="ChEBI" id="CHEBI:30616"/>
    </ligand>
</feature>
<feature type="binding site" evidence="2">
    <location>
        <position position="519"/>
    </location>
    <ligand>
        <name>substrate</name>
    </ligand>
</feature>
<feature type="sequence conflict" description="In Ref. 3; AAA79759." evidence="5" ref="3">
    <original>Y</original>
    <variation>I</variation>
    <location>
        <position position="360"/>
    </location>
</feature>
<feature type="helix" evidence="8">
    <location>
        <begin position="10"/>
        <end position="18"/>
    </location>
</feature>
<feature type="helix" evidence="8">
    <location>
        <begin position="27"/>
        <end position="38"/>
    </location>
</feature>
<feature type="strand" evidence="8">
    <location>
        <begin position="41"/>
        <end position="46"/>
    </location>
</feature>
<feature type="strand" evidence="8">
    <location>
        <begin position="49"/>
        <end position="52"/>
    </location>
</feature>
<feature type="helix" evidence="8">
    <location>
        <begin position="53"/>
        <end position="70"/>
    </location>
</feature>
<feature type="strand" evidence="8">
    <location>
        <begin position="77"/>
        <end position="80"/>
    </location>
</feature>
<feature type="strand" evidence="7">
    <location>
        <begin position="84"/>
        <end position="86"/>
    </location>
</feature>
<feature type="helix" evidence="8">
    <location>
        <begin position="87"/>
        <end position="98"/>
    </location>
</feature>
<feature type="strand" evidence="8">
    <location>
        <begin position="101"/>
        <end position="104"/>
    </location>
</feature>
<feature type="helix" evidence="8">
    <location>
        <begin position="111"/>
        <end position="120"/>
    </location>
</feature>
<feature type="strand" evidence="8">
    <location>
        <begin position="124"/>
        <end position="132"/>
    </location>
</feature>
<feature type="helix" evidence="8">
    <location>
        <begin position="137"/>
        <end position="147"/>
    </location>
</feature>
<feature type="strand" evidence="8">
    <location>
        <begin position="154"/>
        <end position="158"/>
    </location>
</feature>
<feature type="strand" evidence="8">
    <location>
        <begin position="163"/>
        <end position="165"/>
    </location>
</feature>
<feature type="helix" evidence="8">
    <location>
        <begin position="166"/>
        <end position="168"/>
    </location>
</feature>
<feature type="strand" evidence="8">
    <location>
        <begin position="183"/>
        <end position="189"/>
    </location>
</feature>
<feature type="strand" evidence="8">
    <location>
        <begin position="193"/>
        <end position="196"/>
    </location>
</feature>
<feature type="strand" evidence="8">
    <location>
        <begin position="199"/>
        <end position="203"/>
    </location>
</feature>
<feature type="helix" evidence="8">
    <location>
        <begin position="204"/>
        <end position="218"/>
    </location>
</feature>
<feature type="strand" evidence="8">
    <location>
        <begin position="225"/>
        <end position="228"/>
    </location>
</feature>
<feature type="helix" evidence="8">
    <location>
        <begin position="235"/>
        <end position="239"/>
    </location>
</feature>
<feature type="helix" evidence="8">
    <location>
        <begin position="242"/>
        <end position="248"/>
    </location>
</feature>
<feature type="strand" evidence="8">
    <location>
        <begin position="252"/>
        <end position="255"/>
    </location>
</feature>
<feature type="strand" evidence="8">
    <location>
        <begin position="257"/>
        <end position="260"/>
    </location>
</feature>
<feature type="helix" evidence="8">
    <location>
        <begin position="261"/>
        <end position="271"/>
    </location>
</feature>
<feature type="strand" evidence="8">
    <location>
        <begin position="274"/>
        <end position="278"/>
    </location>
</feature>
<feature type="helix" evidence="8">
    <location>
        <begin position="280"/>
        <end position="292"/>
    </location>
</feature>
<feature type="strand" evidence="8">
    <location>
        <begin position="302"/>
        <end position="308"/>
    </location>
</feature>
<feature type="helix" evidence="8">
    <location>
        <begin position="312"/>
        <end position="315"/>
    </location>
</feature>
<feature type="helix" evidence="8">
    <location>
        <begin position="318"/>
        <end position="321"/>
    </location>
</feature>
<feature type="strand" evidence="8">
    <location>
        <begin position="324"/>
        <end position="331"/>
    </location>
</feature>
<feature type="strand" evidence="8">
    <location>
        <begin position="337"/>
        <end position="339"/>
    </location>
</feature>
<feature type="strand" evidence="9">
    <location>
        <begin position="342"/>
        <end position="344"/>
    </location>
</feature>
<feature type="helix" evidence="8">
    <location>
        <begin position="346"/>
        <end position="351"/>
    </location>
</feature>
<feature type="strand" evidence="8">
    <location>
        <begin position="355"/>
        <end position="358"/>
    </location>
</feature>
<feature type="strand" evidence="8">
    <location>
        <begin position="362"/>
        <end position="366"/>
    </location>
</feature>
<feature type="strand" evidence="8">
    <location>
        <begin position="379"/>
        <end position="384"/>
    </location>
</feature>
<feature type="helix" evidence="8">
    <location>
        <begin position="396"/>
        <end position="402"/>
    </location>
</feature>
<feature type="strand" evidence="8">
    <location>
        <begin position="409"/>
        <end position="417"/>
    </location>
</feature>
<feature type="strand" evidence="9">
    <location>
        <begin position="419"/>
        <end position="421"/>
    </location>
</feature>
<feature type="strand" evidence="8">
    <location>
        <begin position="423"/>
        <end position="428"/>
    </location>
</feature>
<feature type="helix" evidence="8">
    <location>
        <begin position="429"/>
        <end position="431"/>
    </location>
</feature>
<feature type="strand" evidence="9">
    <location>
        <begin position="433"/>
        <end position="435"/>
    </location>
</feature>
<feature type="strand" evidence="9">
    <location>
        <begin position="438"/>
        <end position="440"/>
    </location>
</feature>
<feature type="helix" evidence="8">
    <location>
        <begin position="442"/>
        <end position="449"/>
    </location>
</feature>
<feature type="strand" evidence="8">
    <location>
        <begin position="455"/>
        <end position="465"/>
    </location>
</feature>
<feature type="turn" evidence="8">
    <location>
        <begin position="466"/>
        <end position="468"/>
    </location>
</feature>
<feature type="strand" evidence="8">
    <location>
        <begin position="469"/>
        <end position="481"/>
    </location>
</feature>
<feature type="helix" evidence="8">
    <location>
        <begin position="485"/>
        <end position="494"/>
    </location>
</feature>
<feature type="helix" evidence="8">
    <location>
        <begin position="499"/>
        <end position="501"/>
    </location>
</feature>
<feature type="strand" evidence="8">
    <location>
        <begin position="504"/>
        <end position="508"/>
    </location>
</feature>
<feature type="helix" evidence="8">
    <location>
        <begin position="522"/>
        <end position="534"/>
    </location>
</feature>
<reference key="1">
    <citation type="journal article" date="1996" name="Gene">
        <title>Sequence and genetic organization of a Bacillus subtilis operon encoding 2,3-dihydroxybenzoate biosynthetic enzymes.</title>
        <authorList>
            <person name="Rowland B.M."/>
            <person name="Grossman T.H."/>
            <person name="Osburne M.S."/>
            <person name="Taber H.W."/>
        </authorList>
    </citation>
    <scope>NUCLEOTIDE SEQUENCE [GENOMIC DNA]</scope>
    <scope>FUNCTION</scope>
    <source>
        <strain>168 / Marburg / ATCC 6051 / DSM 10 / JCM 1465 / NBRC 13719 / NCIMB 3610 / NRRL NRS-744 / VKM B-501</strain>
    </source>
</reference>
<reference key="2">
    <citation type="journal article" date="1997" name="Nature">
        <title>The complete genome sequence of the Gram-positive bacterium Bacillus subtilis.</title>
        <authorList>
            <person name="Kunst F."/>
            <person name="Ogasawara N."/>
            <person name="Moszer I."/>
            <person name="Albertini A.M."/>
            <person name="Alloni G."/>
            <person name="Azevedo V."/>
            <person name="Bertero M.G."/>
            <person name="Bessieres P."/>
            <person name="Bolotin A."/>
            <person name="Borchert S."/>
            <person name="Borriss R."/>
            <person name="Boursier L."/>
            <person name="Brans A."/>
            <person name="Braun M."/>
            <person name="Brignell S.C."/>
            <person name="Bron S."/>
            <person name="Brouillet S."/>
            <person name="Bruschi C.V."/>
            <person name="Caldwell B."/>
            <person name="Capuano V."/>
            <person name="Carter N.M."/>
            <person name="Choi S.-K."/>
            <person name="Codani J.-J."/>
            <person name="Connerton I.F."/>
            <person name="Cummings N.J."/>
            <person name="Daniel R.A."/>
            <person name="Denizot F."/>
            <person name="Devine K.M."/>
            <person name="Duesterhoeft A."/>
            <person name="Ehrlich S.D."/>
            <person name="Emmerson P.T."/>
            <person name="Entian K.-D."/>
            <person name="Errington J."/>
            <person name="Fabret C."/>
            <person name="Ferrari E."/>
            <person name="Foulger D."/>
            <person name="Fritz C."/>
            <person name="Fujita M."/>
            <person name="Fujita Y."/>
            <person name="Fuma S."/>
            <person name="Galizzi A."/>
            <person name="Galleron N."/>
            <person name="Ghim S.-Y."/>
            <person name="Glaser P."/>
            <person name="Goffeau A."/>
            <person name="Golightly E.J."/>
            <person name="Grandi G."/>
            <person name="Guiseppi G."/>
            <person name="Guy B.J."/>
            <person name="Haga K."/>
            <person name="Haiech J."/>
            <person name="Harwood C.R."/>
            <person name="Henaut A."/>
            <person name="Hilbert H."/>
            <person name="Holsappel S."/>
            <person name="Hosono S."/>
            <person name="Hullo M.-F."/>
            <person name="Itaya M."/>
            <person name="Jones L.-M."/>
            <person name="Joris B."/>
            <person name="Karamata D."/>
            <person name="Kasahara Y."/>
            <person name="Klaerr-Blanchard M."/>
            <person name="Klein C."/>
            <person name="Kobayashi Y."/>
            <person name="Koetter P."/>
            <person name="Koningstein G."/>
            <person name="Krogh S."/>
            <person name="Kumano M."/>
            <person name="Kurita K."/>
            <person name="Lapidus A."/>
            <person name="Lardinois S."/>
            <person name="Lauber J."/>
            <person name="Lazarevic V."/>
            <person name="Lee S.-M."/>
            <person name="Levine A."/>
            <person name="Liu H."/>
            <person name="Masuda S."/>
            <person name="Mauel C."/>
            <person name="Medigue C."/>
            <person name="Medina N."/>
            <person name="Mellado R.P."/>
            <person name="Mizuno M."/>
            <person name="Moestl D."/>
            <person name="Nakai S."/>
            <person name="Noback M."/>
            <person name="Noone D."/>
            <person name="O'Reilly M."/>
            <person name="Ogawa K."/>
            <person name="Ogiwara A."/>
            <person name="Oudega B."/>
            <person name="Park S.-H."/>
            <person name="Parro V."/>
            <person name="Pohl T.M."/>
            <person name="Portetelle D."/>
            <person name="Porwollik S."/>
            <person name="Prescott A.M."/>
            <person name="Presecan E."/>
            <person name="Pujic P."/>
            <person name="Purnelle B."/>
            <person name="Rapoport G."/>
            <person name="Rey M."/>
            <person name="Reynolds S."/>
            <person name="Rieger M."/>
            <person name="Rivolta C."/>
            <person name="Rocha E."/>
            <person name="Roche B."/>
            <person name="Rose M."/>
            <person name="Sadaie Y."/>
            <person name="Sato T."/>
            <person name="Scanlan E."/>
            <person name="Schleich S."/>
            <person name="Schroeter R."/>
            <person name="Scoffone F."/>
            <person name="Sekiguchi J."/>
            <person name="Sekowska A."/>
            <person name="Seror S.J."/>
            <person name="Serror P."/>
            <person name="Shin B.-S."/>
            <person name="Soldo B."/>
            <person name="Sorokin A."/>
            <person name="Tacconi E."/>
            <person name="Takagi T."/>
            <person name="Takahashi H."/>
            <person name="Takemaru K."/>
            <person name="Takeuchi M."/>
            <person name="Tamakoshi A."/>
            <person name="Tanaka T."/>
            <person name="Terpstra P."/>
            <person name="Tognoni A."/>
            <person name="Tosato V."/>
            <person name="Uchiyama S."/>
            <person name="Vandenbol M."/>
            <person name="Vannier F."/>
            <person name="Vassarotti A."/>
            <person name="Viari A."/>
            <person name="Wambutt R."/>
            <person name="Wedler E."/>
            <person name="Wedler H."/>
            <person name="Weitzenegger T."/>
            <person name="Winters P."/>
            <person name="Wipat A."/>
            <person name="Yamamoto H."/>
            <person name="Yamane K."/>
            <person name="Yasumoto K."/>
            <person name="Yata K."/>
            <person name="Yoshida K."/>
            <person name="Yoshikawa H.-F."/>
            <person name="Zumstein E."/>
            <person name="Yoshikawa H."/>
            <person name="Danchin A."/>
        </authorList>
    </citation>
    <scope>NUCLEOTIDE SEQUENCE [LARGE SCALE GENOMIC DNA]</scope>
    <source>
        <strain>168</strain>
    </source>
</reference>
<reference key="3">
    <citation type="journal article" date="1993" name="Gene">
        <title>Cloning and mapping of the Bacillus subtilis locus homologous to Escherichia coli ent genes.</title>
        <authorList>
            <person name="Adams R."/>
            <person name="Schumann W."/>
        </authorList>
    </citation>
    <scope>NUCLEOTIDE SEQUENCE [GENOMIC DNA] OF 341-533</scope>
    <source>
        <strain>168</strain>
    </source>
</reference>
<reference key="4">
    <citation type="journal article" date="2002" name="Proc. Natl. Acad. Sci. U.S.A.">
        <title>Crystal structure of DhbE, an archetype for aryl acid activating domains of modular nonribosomal peptide synthetases.</title>
        <authorList>
            <person name="May J.J."/>
            <person name="Kessler N."/>
            <person name="Marahiel M.A."/>
            <person name="Stubbs M.T."/>
        </authorList>
    </citation>
    <scope>X-RAY CRYSTALLOGRAPHY (2.15 ANGSTROMS) IN COMPLEXES WITH AMP AND 2,3-DIHYDROXYBENZOATE</scope>
</reference>
<organism>
    <name type="scientific">Bacillus subtilis (strain 168)</name>
    <dbReference type="NCBI Taxonomy" id="224308"/>
    <lineage>
        <taxon>Bacteria</taxon>
        <taxon>Bacillati</taxon>
        <taxon>Bacillota</taxon>
        <taxon>Bacilli</taxon>
        <taxon>Bacillales</taxon>
        <taxon>Bacillaceae</taxon>
        <taxon>Bacillus</taxon>
    </lineage>
</organism>
<protein>
    <recommendedName>
        <fullName evidence="4">2,3-dihydroxybenzoate-AMP ligase</fullName>
        <ecNumber evidence="1">6.2.1.71</ecNumber>
    </recommendedName>
    <alternativeName>
        <fullName>Dihydroxybenzoic acid-activating enzyme</fullName>
    </alternativeName>
</protein>
<gene>
    <name evidence="4" type="primary">dhbE</name>
    <name type="synonym">entE</name>
    <name type="ordered locus">BSU31980</name>
</gene>
<dbReference type="EC" id="6.2.1.71" evidence="1"/>
<dbReference type="EMBL" id="U26444">
    <property type="protein sequence ID" value="AAC44632.1"/>
    <property type="molecule type" value="Genomic_DNA"/>
</dbReference>
<dbReference type="EMBL" id="AL009126">
    <property type="protein sequence ID" value="CAB15188.1"/>
    <property type="molecule type" value="Genomic_DNA"/>
</dbReference>
<dbReference type="EMBL" id="L08645">
    <property type="protein sequence ID" value="AAA79759.1"/>
    <property type="molecule type" value="Genomic_DNA"/>
</dbReference>
<dbReference type="PIR" id="D69615">
    <property type="entry name" value="D69615"/>
</dbReference>
<dbReference type="RefSeq" id="NP_391078.1">
    <property type="nucleotide sequence ID" value="NC_000964.3"/>
</dbReference>
<dbReference type="RefSeq" id="WP_003243083.1">
    <property type="nucleotide sequence ID" value="NZ_OZ025638.1"/>
</dbReference>
<dbReference type="PDB" id="1MD9">
    <property type="method" value="X-ray"/>
    <property type="resolution" value="2.80 A"/>
    <property type="chains" value="A=1-539"/>
</dbReference>
<dbReference type="PDB" id="1MDB">
    <property type="method" value="X-ray"/>
    <property type="resolution" value="2.15 A"/>
    <property type="chains" value="A=1-539"/>
</dbReference>
<dbReference type="PDB" id="1MDF">
    <property type="method" value="X-ray"/>
    <property type="resolution" value="2.50 A"/>
    <property type="chains" value="A=1-539"/>
</dbReference>
<dbReference type="PDBsum" id="1MD9"/>
<dbReference type="PDBsum" id="1MDB"/>
<dbReference type="PDBsum" id="1MDF"/>
<dbReference type="SMR" id="P40871"/>
<dbReference type="FunCoup" id="P40871">
    <property type="interactions" value="35"/>
</dbReference>
<dbReference type="IntAct" id="P40871">
    <property type="interactions" value="1"/>
</dbReference>
<dbReference type="MINT" id="P40871"/>
<dbReference type="STRING" id="224308.BSU31980"/>
<dbReference type="DrugBank" id="DB01672">
    <property type="generic name" value="2,3-Dihydroxy-Benzoic Acid"/>
</dbReference>
<dbReference type="jPOST" id="P40871"/>
<dbReference type="PaxDb" id="224308-BSU31980"/>
<dbReference type="EnsemblBacteria" id="CAB15188">
    <property type="protein sequence ID" value="CAB15188"/>
    <property type="gene ID" value="BSU_31980"/>
</dbReference>
<dbReference type="GeneID" id="936509"/>
<dbReference type="KEGG" id="bsu:BSU31980"/>
<dbReference type="PATRIC" id="fig|224308.179.peg.3464"/>
<dbReference type="eggNOG" id="COG1021">
    <property type="taxonomic scope" value="Bacteria"/>
</dbReference>
<dbReference type="InParanoid" id="P40871"/>
<dbReference type="OrthoDB" id="9757771at2"/>
<dbReference type="PhylomeDB" id="P40871"/>
<dbReference type="BioCyc" id="BSUB:BSU31980-MONOMER"/>
<dbReference type="BioCyc" id="MetaCyc:MONOMER-13920"/>
<dbReference type="SABIO-RK" id="P40871"/>
<dbReference type="UniPathway" id="UPA00013"/>
<dbReference type="EvolutionaryTrace" id="P40871"/>
<dbReference type="Proteomes" id="UP000001570">
    <property type="component" value="Chromosome"/>
</dbReference>
<dbReference type="GO" id="GO:0005737">
    <property type="term" value="C:cytoplasm"/>
    <property type="evidence" value="ECO:0007669"/>
    <property type="project" value="UniProtKB-SubCell"/>
</dbReference>
<dbReference type="GO" id="GO:0008668">
    <property type="term" value="F:2,3-dihydroxybenzoate--[aryl-carrier protein] ligase"/>
    <property type="evidence" value="ECO:0007669"/>
    <property type="project" value="InterPro"/>
</dbReference>
<dbReference type="GO" id="GO:0005524">
    <property type="term" value="F:ATP binding"/>
    <property type="evidence" value="ECO:0007669"/>
    <property type="project" value="UniProtKB-KW"/>
</dbReference>
<dbReference type="GO" id="GO:0019290">
    <property type="term" value="P:siderophore biosynthetic process"/>
    <property type="evidence" value="ECO:0007669"/>
    <property type="project" value="InterPro"/>
</dbReference>
<dbReference type="CDD" id="cd05920">
    <property type="entry name" value="23DHB-AMP_lg"/>
    <property type="match status" value="1"/>
</dbReference>
<dbReference type="FunFam" id="3.30.300.30:FF:000008">
    <property type="entry name" value="2,3-dihydroxybenzoate-AMP ligase"/>
    <property type="match status" value="1"/>
</dbReference>
<dbReference type="FunFam" id="2.30.38.10:FF:000003">
    <property type="entry name" value="Vibriobactin-specific 2,3-dihydroxybenzoate-AMP ligase"/>
    <property type="match status" value="1"/>
</dbReference>
<dbReference type="FunFam" id="3.40.50.980:FF:000003">
    <property type="entry name" value="Vibriobactin-specific 2,3-dihydroxybenzoate-AMP ligase"/>
    <property type="match status" value="1"/>
</dbReference>
<dbReference type="Gene3D" id="3.30.300.30">
    <property type="match status" value="1"/>
</dbReference>
<dbReference type="Gene3D" id="3.40.50.980">
    <property type="match status" value="2"/>
</dbReference>
<dbReference type="Gene3D" id="2.30.38.10">
    <property type="entry name" value="Luciferase, Domain 3"/>
    <property type="match status" value="1"/>
</dbReference>
<dbReference type="InterPro" id="IPR025110">
    <property type="entry name" value="AMP-bd_C"/>
</dbReference>
<dbReference type="InterPro" id="IPR045851">
    <property type="entry name" value="AMP-bd_C_sf"/>
</dbReference>
<dbReference type="InterPro" id="IPR020845">
    <property type="entry name" value="AMP-binding_CS"/>
</dbReference>
<dbReference type="InterPro" id="IPR000873">
    <property type="entry name" value="AMP-dep_synth/lig_dom"/>
</dbReference>
<dbReference type="InterPro" id="IPR050237">
    <property type="entry name" value="ATP-dep_AMP-bd_enzyme"/>
</dbReference>
<dbReference type="InterPro" id="IPR011963">
    <property type="entry name" value="DHB_AMP_lig"/>
</dbReference>
<dbReference type="NCBIfam" id="TIGR02275">
    <property type="entry name" value="DHB_AMP_lig"/>
    <property type="match status" value="1"/>
</dbReference>
<dbReference type="PANTHER" id="PTHR43767">
    <property type="entry name" value="LONG-CHAIN-FATTY-ACID--COA LIGASE"/>
    <property type="match status" value="1"/>
</dbReference>
<dbReference type="PANTHER" id="PTHR43767:SF1">
    <property type="entry name" value="NONRIBOSOMAL PEPTIDE SYNTHASE PES1 (EUROFUNG)-RELATED"/>
    <property type="match status" value="1"/>
</dbReference>
<dbReference type="Pfam" id="PF00501">
    <property type="entry name" value="AMP-binding"/>
    <property type="match status" value="1"/>
</dbReference>
<dbReference type="Pfam" id="PF13193">
    <property type="entry name" value="AMP-binding_C"/>
    <property type="match status" value="1"/>
</dbReference>
<dbReference type="SUPFAM" id="SSF56801">
    <property type="entry name" value="Acetyl-CoA synthetase-like"/>
    <property type="match status" value="1"/>
</dbReference>
<dbReference type="PROSITE" id="PS00455">
    <property type="entry name" value="AMP_BINDING"/>
    <property type="match status" value="1"/>
</dbReference>
<evidence type="ECO:0000250" key="1">
    <source>
        <dbReference type="UniProtKB" id="P10378"/>
    </source>
</evidence>
<evidence type="ECO:0000269" key="2">
    <source>
    </source>
</evidence>
<evidence type="ECO:0000269" key="3">
    <source>
    </source>
</evidence>
<evidence type="ECO:0000303" key="4">
    <source>
    </source>
</evidence>
<evidence type="ECO:0000305" key="5"/>
<evidence type="ECO:0000305" key="6">
    <source>
    </source>
</evidence>
<evidence type="ECO:0007829" key="7">
    <source>
        <dbReference type="PDB" id="1MD9"/>
    </source>
</evidence>
<evidence type="ECO:0007829" key="8">
    <source>
        <dbReference type="PDB" id="1MDB"/>
    </source>
</evidence>
<evidence type="ECO:0007829" key="9">
    <source>
        <dbReference type="PDB" id="1MDF"/>
    </source>
</evidence>
<name>DHBE_BACSU</name>
<sequence>MLKGFTPWPDELAETYRKNGCWAGETFGDLLRDRAAKYGDRIAITCGNTHWSYRELDTRADRLAAGFQKLGIQQMDRVVVQLPNIKEFFEVIFALFRLGALPVFALPSHRSSEITYFCEFAEAAAYIIPDAYSGFDYRSLARQVQSKLPTLKNIIVAGEAEEFLPLEDLHAEPVKLPEVKSSDVAFLQLSGGSTGLSKLIPRTHDDYIYSLKRSVEVCWLDHSTVYLAALPMAHNYPLSSPGVLGVLYAGGRVVLSPSPSPDDAFPLIEREKVTITALVPPLAMVWMDAASSRRDDLSSLQVLQVGGAKFSAEAARRVKAVFGCTLQQVFGMAEGLVNYTRLDDPEEIIVNTQGKPMSPYDEMRVWDDHDRDVKPGETGHLLTRGPYTIRGYYKAEEHNAASFTEDGFYRTGDIVRLTRDGYIVVEGRAKDQINRGGEKVAAEEVENHLLAHPAVHDAAMVSMPDQFLGERSCVFIIPRDEAPKAAELKAFLRERGLAAYKIPDRVEFVESFPQTGVGKVSKKALREAISEKLLAGFKK</sequence>
<proteinExistence type="evidence at protein level"/>
<keyword id="KW-0002">3D-structure</keyword>
<keyword id="KW-0067">ATP-binding</keyword>
<keyword id="KW-0963">Cytoplasm</keyword>
<keyword id="KW-0436">Ligase</keyword>
<keyword id="KW-0547">Nucleotide-binding</keyword>
<keyword id="KW-1185">Reference proteome</keyword>
<accession>P40871</accession>